<dbReference type="EMBL" id="U75930">
    <property type="protein sequence ID" value="AAC59038.1"/>
    <property type="molecule type" value="Genomic_DNA"/>
</dbReference>
<dbReference type="RefSeq" id="NP_046195.1">
    <property type="nucleotide sequence ID" value="NC_001875.2"/>
</dbReference>
<dbReference type="SMR" id="O10294"/>
<dbReference type="KEGG" id="vg:912103"/>
<dbReference type="OrthoDB" id="26917at10239"/>
<dbReference type="Proteomes" id="UP000009248">
    <property type="component" value="Genome"/>
</dbReference>
<dbReference type="InterPro" id="IPR009265">
    <property type="entry name" value="AcMNPV_Orf29"/>
</dbReference>
<dbReference type="Pfam" id="PF06034">
    <property type="entry name" value="DUF919"/>
    <property type="match status" value="1"/>
</dbReference>
<sequence length="75" mass="8518">MLSSKGGDAKVVGDGAKSLANQLDQINKIKRKATIESQHFEKIYKLTKNPNELQDLHKRVMDSRVQFLNFGVQNF</sequence>
<name>Y029_NPVOP</name>
<gene>
    <name type="ORF">ORF39</name>
</gene>
<organismHost>
    <name type="scientific">Orgyia pseudotsugata</name>
    <name type="common">Douglas-fir tussock moth</name>
    <dbReference type="NCBI Taxonomy" id="33414"/>
</organismHost>
<keyword id="KW-1185">Reference proteome</keyword>
<proteinExistence type="predicted"/>
<accession>O10294</accession>
<protein>
    <recommendedName>
        <fullName>Uncharacterized 8.5 kDa protein</fullName>
    </recommendedName>
</protein>
<feature type="chain" id="PRO_0000132969" description="Uncharacterized 8.5 kDa protein">
    <location>
        <begin position="1"/>
        <end position="75"/>
    </location>
</feature>
<reference key="1">
    <citation type="journal article" date="1997" name="Virology">
        <title>The sequence of the Orgyia pseudotsugata multinucleocapsid nuclear polyhedrosis virus genome.</title>
        <authorList>
            <person name="Ahrens C.H."/>
            <person name="Russell R.R."/>
            <person name="Funk C.J."/>
            <person name="Evans J."/>
            <person name="Harwood S."/>
            <person name="Rohrmann G.F."/>
        </authorList>
    </citation>
    <scope>NUCLEOTIDE SEQUENCE [LARGE SCALE GENOMIC DNA]</scope>
</reference>
<organism>
    <name type="scientific">Orgyia pseudotsugata multicapsid polyhedrosis virus</name>
    <name type="common">OpMNPV</name>
    <dbReference type="NCBI Taxonomy" id="262177"/>
    <lineage>
        <taxon>Viruses</taxon>
        <taxon>Viruses incertae sedis</taxon>
        <taxon>Naldaviricetes</taxon>
        <taxon>Lefavirales</taxon>
        <taxon>Baculoviridae</taxon>
        <taxon>Alphabaculovirus</taxon>
        <taxon>Alphabaculovirus orpseudotsugatae</taxon>
    </lineage>
</organism>